<proteinExistence type="evidence at protein level"/>
<comment type="function">
    <text evidence="2 3">Sliding clamp subunit that acts as a moving platform for DNA processing. Responsible for tethering the catalytic subunit of DNA polymerase and other proteins to DNA during high-speed replication (By similarity). Both trimeric complexes inhibit DNA ligase and both 3'-5' and 5'-3' activity of Hel308 (Hjm) helicase, but stimulate Hjc, the Holliday junction cleavage enzyme.</text>
</comment>
<comment type="subunit">
    <text evidence="1 3 4">The subunits circularize to form a toroid; DNA passes through its center. Replication factor C (RFC) is required to load the toroid on the DNA (By similarity). Forms a dimeric complex with PCNA3 and trimeric complexes PCNA123 and PCNA323; does not form homotrimers (PubMed:18782564). Crystal structures show a heterotetramer of 2 PCNA2 and 2 PCNA3, which would be large enough to clamp a Holliday junction (PubMed:21352919).</text>
</comment>
<comment type="similarity">
    <text evidence="2">Belongs to the PCNA family.</text>
</comment>
<keyword id="KW-0002">3D-structure</keyword>
<keyword id="KW-0235">DNA replication</keyword>
<keyword id="KW-0238">DNA-binding</keyword>
<keyword id="KW-1185">Reference proteome</keyword>
<name>PCNA2_SULTO</name>
<organism>
    <name type="scientific">Sulfurisphaera tokodaii (strain DSM 16993 / JCM 10545 / NBRC 100140 / 7)</name>
    <name type="common">Sulfolobus tokodaii</name>
    <dbReference type="NCBI Taxonomy" id="273063"/>
    <lineage>
        <taxon>Archaea</taxon>
        <taxon>Thermoproteota</taxon>
        <taxon>Thermoprotei</taxon>
        <taxon>Sulfolobales</taxon>
        <taxon>Sulfolobaceae</taxon>
        <taxon>Sulfurisphaera</taxon>
    </lineage>
</organism>
<evidence type="ECO:0000250" key="1"/>
<evidence type="ECO:0000255" key="2">
    <source>
        <dbReference type="HAMAP-Rule" id="MF_00317"/>
    </source>
</evidence>
<evidence type="ECO:0000269" key="3">
    <source>
    </source>
</evidence>
<evidence type="ECO:0000269" key="4">
    <source>
    </source>
</evidence>
<evidence type="ECO:0007829" key="5">
    <source>
        <dbReference type="PDB" id="3AIZ"/>
    </source>
</evidence>
<sequence length="248" mass="27542">MIKATYSSAKDFYSLLSGLLKVTDEIILNFTEDSIFSRYLTDDKVLMVIFKIPKEYLEDYTIDKPLGIKININDLKKILGKAKSKSATVTLEETEAGLKVTVRDEKTGTRSNIYIKGEKTSIDQLTEPKVNLSVTFTTDGDVLKDIARDLSLVGEEVEISADENTVTLSTEEAGRTYKSLLKQDKPLKSLNVESPSKAVYSIEVLKDVFKVTSISQNVTVGFGNNIPMKIEVPTDSGGQLIFWIAPRL</sequence>
<dbReference type="EMBL" id="BA000023">
    <property type="protein sequence ID" value="BAK54265.1"/>
    <property type="molecule type" value="Genomic_DNA"/>
</dbReference>
<dbReference type="RefSeq" id="WP_010978361.1">
    <property type="nucleotide sequence ID" value="NC_003106.2"/>
</dbReference>
<dbReference type="PDB" id="3AIX">
    <property type="method" value="X-ray"/>
    <property type="resolution" value="2.90 A"/>
    <property type="chains" value="B=1-248"/>
</dbReference>
<dbReference type="PDB" id="3AIZ">
    <property type="method" value="X-ray"/>
    <property type="resolution" value="2.80 A"/>
    <property type="chains" value="A/B=1-248"/>
</dbReference>
<dbReference type="PDBsum" id="3AIX"/>
<dbReference type="PDBsum" id="3AIZ"/>
<dbReference type="SMR" id="Q975M2"/>
<dbReference type="STRING" id="273063.STK_03970"/>
<dbReference type="GeneID" id="1458322"/>
<dbReference type="KEGG" id="sto:STK_03970"/>
<dbReference type="PATRIC" id="fig|273063.9.peg.458"/>
<dbReference type="eggNOG" id="arCOG00488">
    <property type="taxonomic scope" value="Archaea"/>
</dbReference>
<dbReference type="OrthoDB" id="14749at2157"/>
<dbReference type="EvolutionaryTrace" id="Q975M2"/>
<dbReference type="Proteomes" id="UP000001015">
    <property type="component" value="Chromosome"/>
</dbReference>
<dbReference type="GO" id="GO:0003677">
    <property type="term" value="F:DNA binding"/>
    <property type="evidence" value="ECO:0007669"/>
    <property type="project" value="UniProtKB-UniRule"/>
</dbReference>
<dbReference type="GO" id="GO:0030337">
    <property type="term" value="F:DNA polymerase processivity factor activity"/>
    <property type="evidence" value="ECO:0007669"/>
    <property type="project" value="UniProtKB-UniRule"/>
</dbReference>
<dbReference type="GO" id="GO:0006272">
    <property type="term" value="P:leading strand elongation"/>
    <property type="evidence" value="ECO:0007669"/>
    <property type="project" value="TreeGrafter"/>
</dbReference>
<dbReference type="GO" id="GO:0006275">
    <property type="term" value="P:regulation of DNA replication"/>
    <property type="evidence" value="ECO:0007669"/>
    <property type="project" value="UniProtKB-UniRule"/>
</dbReference>
<dbReference type="CDD" id="cd00577">
    <property type="entry name" value="PCNA"/>
    <property type="match status" value="1"/>
</dbReference>
<dbReference type="Gene3D" id="3.70.10.10">
    <property type="match status" value="1"/>
</dbReference>
<dbReference type="HAMAP" id="MF_00317">
    <property type="entry name" value="DNApol_clamp_arch"/>
    <property type="match status" value="1"/>
</dbReference>
<dbReference type="InterPro" id="IPR046938">
    <property type="entry name" value="DNA_clamp_sf"/>
</dbReference>
<dbReference type="InterPro" id="IPR000730">
    <property type="entry name" value="Pr_cel_nuc_antig"/>
</dbReference>
<dbReference type="InterPro" id="IPR022649">
    <property type="entry name" value="Pr_cel_nuc_antig_C"/>
</dbReference>
<dbReference type="InterPro" id="IPR022648">
    <property type="entry name" value="Pr_cel_nuc_antig_N"/>
</dbReference>
<dbReference type="NCBIfam" id="NF002218">
    <property type="entry name" value="PRK01115.1-1"/>
    <property type="match status" value="1"/>
</dbReference>
<dbReference type="PANTHER" id="PTHR11352">
    <property type="entry name" value="PROLIFERATING CELL NUCLEAR ANTIGEN"/>
    <property type="match status" value="1"/>
</dbReference>
<dbReference type="PANTHER" id="PTHR11352:SF0">
    <property type="entry name" value="PROLIFERATING CELL NUCLEAR ANTIGEN"/>
    <property type="match status" value="1"/>
</dbReference>
<dbReference type="Pfam" id="PF02747">
    <property type="entry name" value="PCNA_C"/>
    <property type="match status" value="1"/>
</dbReference>
<dbReference type="Pfam" id="PF00705">
    <property type="entry name" value="PCNA_N"/>
    <property type="match status" value="1"/>
</dbReference>
<dbReference type="SUPFAM" id="SSF55979">
    <property type="entry name" value="DNA clamp"/>
    <property type="match status" value="2"/>
</dbReference>
<reference key="1">
    <citation type="journal article" date="2001" name="DNA Res.">
        <title>Complete genome sequence of an aerobic thermoacidophilic Crenarchaeon, Sulfolobus tokodaii strain7.</title>
        <authorList>
            <person name="Kawarabayasi Y."/>
            <person name="Hino Y."/>
            <person name="Horikawa H."/>
            <person name="Jin-no K."/>
            <person name="Takahashi M."/>
            <person name="Sekine M."/>
            <person name="Baba S."/>
            <person name="Ankai A."/>
            <person name="Kosugi H."/>
            <person name="Hosoyama A."/>
            <person name="Fukui S."/>
            <person name="Nagai Y."/>
            <person name="Nishijima K."/>
            <person name="Otsuka R."/>
            <person name="Nakazawa H."/>
            <person name="Takamiya M."/>
            <person name="Kato Y."/>
            <person name="Yoshizawa T."/>
            <person name="Tanaka T."/>
            <person name="Kudoh Y."/>
            <person name="Yamazaki J."/>
            <person name="Kushida N."/>
            <person name="Oguchi A."/>
            <person name="Aoki K."/>
            <person name="Masuda S."/>
            <person name="Yanagii M."/>
            <person name="Nishimura M."/>
            <person name="Yamagishi A."/>
            <person name="Oshima T."/>
            <person name="Kikuchi H."/>
        </authorList>
    </citation>
    <scope>NUCLEOTIDE SEQUENCE [LARGE SCALE GENOMIC DNA]</scope>
    <source>
        <strain>DSM 16993 / JCM 10545 / NBRC 100140 / 7</strain>
    </source>
</reference>
<reference key="2">
    <citation type="journal article" date="2008" name="Biochem. Biophys. Res. Commun.">
        <title>Spatial subunit distribution and in vitro functions of the novel trimeric PCNA complex from Sulfolobus tokodaii.</title>
        <authorList>
            <person name="Lu S."/>
            <person name="Li Z."/>
            <person name="Wang Z."/>
            <person name="Ma X."/>
            <person name="Sheng D."/>
            <person name="Ni J."/>
            <person name="Shen Y."/>
        </authorList>
    </citation>
    <scope>FUNCTION</scope>
    <scope>INTERACTION WITH PCNA3</scope>
    <scope>SUBUNIT</scope>
    <source>
        <strain>DSM 16993 / JCM 10545 / NBRC 100140 / 7</strain>
    </source>
</reference>
<reference key="3">
    <citation type="journal article" date="2011" name="J. Struct. Biol.">
        <title>A novel heterotetrameric structure of the crenarchaeal PCNA2-PCNA3 complex.</title>
        <authorList>
            <person name="Kawai A."/>
            <person name="Hashimoto H."/>
            <person name="Higuchi S."/>
            <person name="Tsunoda M."/>
            <person name="Sato M."/>
            <person name="Nakamura K.T."/>
            <person name="Miyamoto S."/>
        </authorList>
    </citation>
    <scope>X-RAY CRYSTALLOGRAPHY (2.8 ANGSTROMS)</scope>
    <scope>SUBUNIT</scope>
</reference>
<feature type="chain" id="PRO_0000149218" description="DNA polymerase sliding clamp 2">
    <location>
        <begin position="1"/>
        <end position="248"/>
    </location>
</feature>
<feature type="strand" evidence="5">
    <location>
        <begin position="3"/>
        <end position="7"/>
    </location>
</feature>
<feature type="helix" evidence="5">
    <location>
        <begin position="9"/>
        <end position="16"/>
    </location>
</feature>
<feature type="strand" evidence="5">
    <location>
        <begin position="24"/>
        <end position="30"/>
    </location>
</feature>
<feature type="strand" evidence="5">
    <location>
        <begin position="32"/>
        <end position="40"/>
    </location>
</feature>
<feature type="strand" evidence="5">
    <location>
        <begin position="44"/>
        <end position="53"/>
    </location>
</feature>
<feature type="helix" evidence="5">
    <location>
        <begin position="54"/>
        <end position="56"/>
    </location>
</feature>
<feature type="strand" evidence="5">
    <location>
        <begin position="58"/>
        <end position="61"/>
    </location>
</feature>
<feature type="strand" evidence="5">
    <location>
        <begin position="66"/>
        <end position="71"/>
    </location>
</feature>
<feature type="helix" evidence="5">
    <location>
        <begin position="72"/>
        <end position="80"/>
    </location>
</feature>
<feature type="strand" evidence="5">
    <location>
        <begin position="88"/>
        <end position="93"/>
    </location>
</feature>
<feature type="strand" evidence="5">
    <location>
        <begin position="95"/>
        <end position="104"/>
    </location>
</feature>
<feature type="turn" evidence="5">
    <location>
        <begin position="105"/>
        <end position="108"/>
    </location>
</feature>
<feature type="strand" evidence="5">
    <location>
        <begin position="109"/>
        <end position="116"/>
    </location>
</feature>
<feature type="strand" evidence="5">
    <location>
        <begin position="118"/>
        <end position="120"/>
    </location>
</feature>
<feature type="strand" evidence="5">
    <location>
        <begin position="133"/>
        <end position="138"/>
    </location>
</feature>
<feature type="helix" evidence="5">
    <location>
        <begin position="140"/>
        <end position="150"/>
    </location>
</feature>
<feature type="strand" evidence="5">
    <location>
        <begin position="155"/>
        <end position="161"/>
    </location>
</feature>
<feature type="strand" evidence="5">
    <location>
        <begin position="163"/>
        <end position="172"/>
    </location>
</feature>
<feature type="strand" evidence="5">
    <location>
        <begin position="175"/>
        <end position="183"/>
    </location>
</feature>
<feature type="strand" evidence="5">
    <location>
        <begin position="186"/>
        <end position="194"/>
    </location>
</feature>
<feature type="strand" evidence="5">
    <location>
        <begin position="196"/>
        <end position="201"/>
    </location>
</feature>
<feature type="helix" evidence="5">
    <location>
        <begin position="202"/>
        <end position="211"/>
    </location>
</feature>
<feature type="helix" evidence="5">
    <location>
        <begin position="212"/>
        <end position="214"/>
    </location>
</feature>
<feature type="strand" evidence="5">
    <location>
        <begin position="216"/>
        <end position="223"/>
    </location>
</feature>
<feature type="strand" evidence="5">
    <location>
        <begin position="226"/>
        <end position="233"/>
    </location>
</feature>
<feature type="strand" evidence="5">
    <location>
        <begin position="239"/>
        <end position="244"/>
    </location>
</feature>
<protein>
    <recommendedName>
        <fullName evidence="2">DNA polymerase sliding clamp 2</fullName>
    </recommendedName>
    <alternativeName>
        <fullName evidence="2">Proliferating cell nuclear antigen homolog 2</fullName>
        <shortName evidence="2">PCNA2</shortName>
    </alternativeName>
</protein>
<gene>
    <name evidence="2" type="primary">pcn2</name>
    <name type="synonym">pcnB</name>
    <name type="ordered locus">STK_03970</name>
</gene>
<accession>Q975M2</accession>
<accession>F9VMW8</accession>